<name>ATPZ_PSEPU</name>
<accession>P0A104</accession>
<accession>P25760</accession>
<organism>
    <name type="scientific">Pseudomonas putida</name>
    <name type="common">Arthrobacter siderocapsulatus</name>
    <dbReference type="NCBI Taxonomy" id="303"/>
    <lineage>
        <taxon>Bacteria</taxon>
        <taxon>Pseudomonadati</taxon>
        <taxon>Pseudomonadota</taxon>
        <taxon>Gammaproteobacteria</taxon>
        <taxon>Pseudomonadales</taxon>
        <taxon>Pseudomonadaceae</taxon>
        <taxon>Pseudomonas</taxon>
    </lineage>
</organism>
<comment type="function">
    <text>A possible function for this protein is to guide the assembly of the membrane sector of the ATPase enzyme complex.</text>
</comment>
<comment type="subcellular location">
    <subcellularLocation>
        <location evidence="2">Cell inner membrane</location>
        <topology evidence="2">Multi-pass membrane protein</topology>
    </subcellularLocation>
</comment>
<comment type="similarity">
    <text evidence="2">Belongs to the bacterial AtpI family.</text>
</comment>
<proteinExistence type="inferred from homology"/>
<dbReference type="EMBL" id="X62540">
    <property type="protein sequence ID" value="CAA44423.1"/>
    <property type="molecule type" value="Genomic_DNA"/>
</dbReference>
<dbReference type="PIR" id="JQ1225">
    <property type="entry name" value="JQ1225"/>
</dbReference>
<dbReference type="RefSeq" id="WP_010955890.1">
    <property type="nucleotide sequence ID" value="NZ_VCPS01000003.1"/>
</dbReference>
<dbReference type="OMA" id="SWQSFRT"/>
<dbReference type="GO" id="GO:0005886">
    <property type="term" value="C:plasma membrane"/>
    <property type="evidence" value="ECO:0007669"/>
    <property type="project" value="UniProtKB-SubCell"/>
</dbReference>
<dbReference type="GO" id="GO:0045259">
    <property type="term" value="C:proton-transporting ATP synthase complex"/>
    <property type="evidence" value="ECO:0007669"/>
    <property type="project" value="UniProtKB-KW"/>
</dbReference>
<dbReference type="GO" id="GO:1902600">
    <property type="term" value="P:proton transmembrane transport"/>
    <property type="evidence" value="ECO:0007669"/>
    <property type="project" value="UniProtKB-KW"/>
</dbReference>
<dbReference type="InterPro" id="IPR005598">
    <property type="entry name" value="ATP_synth_I"/>
</dbReference>
<dbReference type="NCBIfam" id="NF004414">
    <property type="entry name" value="PRK05760.1"/>
    <property type="match status" value="1"/>
</dbReference>
<dbReference type="Pfam" id="PF03899">
    <property type="entry name" value="ATP-synt_I"/>
    <property type="match status" value="1"/>
</dbReference>
<sequence length="135" mass="14944">MEIRTPNRLPFHRWAVFPVLLAQFVVLLLATLVLWQWKGSVSGYSGLCGGLIAWLPNVYFAWKAFRFSGARAAQAIVKSFYAGEAGKMILTAVLFALTFAGVKPLAPLAVFGVFVLTLLVSWFAPLLMNKRLSRP</sequence>
<keyword id="KW-0997">Cell inner membrane</keyword>
<keyword id="KW-1003">Cell membrane</keyword>
<keyword id="KW-0138">CF(0)</keyword>
<keyword id="KW-0375">Hydrogen ion transport</keyword>
<keyword id="KW-0406">Ion transport</keyword>
<keyword id="KW-0472">Membrane</keyword>
<keyword id="KW-0812">Transmembrane</keyword>
<keyword id="KW-1133">Transmembrane helix</keyword>
<keyword id="KW-0813">Transport</keyword>
<protein>
    <recommendedName>
        <fullName>ATP synthase protein I</fullName>
    </recommendedName>
</protein>
<reference key="1">
    <citation type="journal article" date="1992" name="Mol. Microbiol.">
        <title>Genes and their organization in the replication origin region of the bacterial chromosome.</title>
        <authorList>
            <person name="Ogasawara N."/>
            <person name="Yoshikawa H."/>
        </authorList>
    </citation>
    <scope>NUCLEOTIDE SEQUENCE [GENOMIC DNA]</scope>
    <source>
        <strain>TN2100</strain>
    </source>
</reference>
<gene>
    <name type="primary">atpI</name>
    <name type="synonym">uncI</name>
</gene>
<feature type="chain" id="PRO_0000071711" description="ATP synthase protein I">
    <location>
        <begin position="1"/>
        <end position="135"/>
    </location>
</feature>
<feature type="transmembrane region" description="Helical" evidence="1">
    <location>
        <begin position="14"/>
        <end position="34"/>
    </location>
</feature>
<feature type="transmembrane region" description="Helical" evidence="1">
    <location>
        <begin position="41"/>
        <end position="61"/>
    </location>
</feature>
<feature type="transmembrane region" description="Helical" evidence="1">
    <location>
        <begin position="82"/>
        <end position="102"/>
    </location>
</feature>
<feature type="transmembrane region" description="Helical" evidence="1">
    <location>
        <begin position="108"/>
        <end position="128"/>
    </location>
</feature>
<evidence type="ECO:0000255" key="1"/>
<evidence type="ECO:0000305" key="2"/>